<reference key="1">
    <citation type="journal article" date="2004" name="Nat. Genet.">
        <title>Comparison of genome degradation in Paratyphi A and Typhi, human-restricted serovars of Salmonella enterica that cause typhoid.</title>
        <authorList>
            <person name="McClelland M."/>
            <person name="Sanderson K.E."/>
            <person name="Clifton S.W."/>
            <person name="Latreille P."/>
            <person name="Porwollik S."/>
            <person name="Sabo A."/>
            <person name="Meyer R."/>
            <person name="Bieri T."/>
            <person name="Ozersky P."/>
            <person name="McLellan M."/>
            <person name="Harkins C.R."/>
            <person name="Wang C."/>
            <person name="Nguyen C."/>
            <person name="Berghoff A."/>
            <person name="Elliott G."/>
            <person name="Kohlberg S."/>
            <person name="Strong C."/>
            <person name="Du F."/>
            <person name="Carter J."/>
            <person name="Kremizki C."/>
            <person name="Layman D."/>
            <person name="Leonard S."/>
            <person name="Sun H."/>
            <person name="Fulton L."/>
            <person name="Nash W."/>
            <person name="Miner T."/>
            <person name="Minx P."/>
            <person name="Delehaunty K."/>
            <person name="Fronick C."/>
            <person name="Magrini V."/>
            <person name="Nhan M."/>
            <person name="Warren W."/>
            <person name="Florea L."/>
            <person name="Spieth J."/>
            <person name="Wilson R.K."/>
        </authorList>
    </citation>
    <scope>NUCLEOTIDE SEQUENCE [LARGE SCALE GENOMIC DNA]</scope>
    <source>
        <strain>ATCC 9150 / SARB42</strain>
    </source>
</reference>
<gene>
    <name evidence="1" type="primary">rsmA</name>
    <name evidence="1" type="synonym">ksgA</name>
    <name type="ordered locus">SPA0091</name>
</gene>
<dbReference type="EC" id="2.1.1.182" evidence="1"/>
<dbReference type="EMBL" id="CP000026">
    <property type="protein sequence ID" value="AAV76124.1"/>
    <property type="molecule type" value="Genomic_DNA"/>
</dbReference>
<dbReference type="RefSeq" id="WP_001065397.1">
    <property type="nucleotide sequence ID" value="NC_006511.1"/>
</dbReference>
<dbReference type="SMR" id="Q5PDD9"/>
<dbReference type="KEGG" id="spt:SPA0091"/>
<dbReference type="HOGENOM" id="CLU_041220_0_1_6"/>
<dbReference type="Proteomes" id="UP000008185">
    <property type="component" value="Chromosome"/>
</dbReference>
<dbReference type="GO" id="GO:0005829">
    <property type="term" value="C:cytosol"/>
    <property type="evidence" value="ECO:0007669"/>
    <property type="project" value="TreeGrafter"/>
</dbReference>
<dbReference type="GO" id="GO:0052908">
    <property type="term" value="F:16S rRNA (adenine(1518)-N(6)/adenine(1519)-N(6))-dimethyltransferase activity"/>
    <property type="evidence" value="ECO:0007669"/>
    <property type="project" value="UniProtKB-EC"/>
</dbReference>
<dbReference type="GO" id="GO:0003723">
    <property type="term" value="F:RNA binding"/>
    <property type="evidence" value="ECO:0007669"/>
    <property type="project" value="UniProtKB-KW"/>
</dbReference>
<dbReference type="FunFam" id="1.10.8.100:FF:000001">
    <property type="entry name" value="Ribosomal RNA small subunit methyltransferase A"/>
    <property type="match status" value="1"/>
</dbReference>
<dbReference type="FunFam" id="3.40.50.150:FF:000006">
    <property type="entry name" value="Ribosomal RNA small subunit methyltransferase A"/>
    <property type="match status" value="1"/>
</dbReference>
<dbReference type="Gene3D" id="1.10.8.100">
    <property type="entry name" value="Ribosomal RNA adenine dimethylase-like, domain 2"/>
    <property type="match status" value="1"/>
</dbReference>
<dbReference type="Gene3D" id="3.40.50.150">
    <property type="entry name" value="Vaccinia Virus protein VP39"/>
    <property type="match status" value="1"/>
</dbReference>
<dbReference type="HAMAP" id="MF_00607">
    <property type="entry name" value="16SrRNA_methyltr_A"/>
    <property type="match status" value="1"/>
</dbReference>
<dbReference type="InterPro" id="IPR001737">
    <property type="entry name" value="KsgA/Erm"/>
</dbReference>
<dbReference type="InterPro" id="IPR023165">
    <property type="entry name" value="rRNA_Ade_diMease-like_C"/>
</dbReference>
<dbReference type="InterPro" id="IPR020596">
    <property type="entry name" value="rRNA_Ade_Mease_Trfase_CS"/>
</dbReference>
<dbReference type="InterPro" id="IPR020598">
    <property type="entry name" value="rRNA_Ade_methylase_Trfase_N"/>
</dbReference>
<dbReference type="InterPro" id="IPR011530">
    <property type="entry name" value="rRNA_adenine_dimethylase"/>
</dbReference>
<dbReference type="InterPro" id="IPR029063">
    <property type="entry name" value="SAM-dependent_MTases_sf"/>
</dbReference>
<dbReference type="NCBIfam" id="TIGR00755">
    <property type="entry name" value="ksgA"/>
    <property type="match status" value="1"/>
</dbReference>
<dbReference type="PANTHER" id="PTHR11727">
    <property type="entry name" value="DIMETHYLADENOSINE TRANSFERASE"/>
    <property type="match status" value="1"/>
</dbReference>
<dbReference type="PANTHER" id="PTHR11727:SF7">
    <property type="entry name" value="DIMETHYLADENOSINE TRANSFERASE-RELATED"/>
    <property type="match status" value="1"/>
</dbReference>
<dbReference type="Pfam" id="PF00398">
    <property type="entry name" value="RrnaAD"/>
    <property type="match status" value="1"/>
</dbReference>
<dbReference type="SMART" id="SM00650">
    <property type="entry name" value="rADc"/>
    <property type="match status" value="1"/>
</dbReference>
<dbReference type="SUPFAM" id="SSF53335">
    <property type="entry name" value="S-adenosyl-L-methionine-dependent methyltransferases"/>
    <property type="match status" value="1"/>
</dbReference>
<dbReference type="PROSITE" id="PS01131">
    <property type="entry name" value="RRNA_A_DIMETH"/>
    <property type="match status" value="1"/>
</dbReference>
<dbReference type="PROSITE" id="PS51689">
    <property type="entry name" value="SAM_RNA_A_N6_MT"/>
    <property type="match status" value="1"/>
</dbReference>
<comment type="function">
    <text evidence="1">Specifically dimethylates two adjacent adenosines (A1518 and A1519) in the loop of a conserved hairpin near the 3'-end of 16S rRNA in the 30S particle. May play a critical role in biogenesis of 30S subunits.</text>
</comment>
<comment type="catalytic activity">
    <reaction evidence="1">
        <text>adenosine(1518)/adenosine(1519) in 16S rRNA + 4 S-adenosyl-L-methionine = N(6)-dimethyladenosine(1518)/N(6)-dimethyladenosine(1519) in 16S rRNA + 4 S-adenosyl-L-homocysteine + 4 H(+)</text>
        <dbReference type="Rhea" id="RHEA:19609"/>
        <dbReference type="Rhea" id="RHEA-COMP:10232"/>
        <dbReference type="Rhea" id="RHEA-COMP:10233"/>
        <dbReference type="ChEBI" id="CHEBI:15378"/>
        <dbReference type="ChEBI" id="CHEBI:57856"/>
        <dbReference type="ChEBI" id="CHEBI:59789"/>
        <dbReference type="ChEBI" id="CHEBI:74411"/>
        <dbReference type="ChEBI" id="CHEBI:74493"/>
        <dbReference type="EC" id="2.1.1.182"/>
    </reaction>
</comment>
<comment type="subcellular location">
    <subcellularLocation>
        <location evidence="1">Cytoplasm</location>
    </subcellularLocation>
</comment>
<comment type="similarity">
    <text evidence="1">Belongs to the class I-like SAM-binding methyltransferase superfamily. rRNA adenine N(6)-methyltransferase family. RsmA subfamily.</text>
</comment>
<accession>Q5PDD9</accession>
<protein>
    <recommendedName>
        <fullName evidence="1">Ribosomal RNA small subunit methyltransferase A</fullName>
        <ecNumber evidence="1">2.1.1.182</ecNumber>
    </recommendedName>
    <alternativeName>
        <fullName evidence="1">16S rRNA (adenine(1518)-N(6)/adenine(1519)-N(6))-dimethyltransferase</fullName>
    </alternativeName>
    <alternativeName>
        <fullName evidence="1">16S rRNA dimethyladenosine transferase</fullName>
    </alternativeName>
    <alternativeName>
        <fullName evidence="1">16S rRNA dimethylase</fullName>
    </alternativeName>
    <alternativeName>
        <fullName evidence="1">S-adenosylmethionine-6-N', N'-adenosyl(rRNA) dimethyltransferase</fullName>
    </alternativeName>
</protein>
<evidence type="ECO:0000255" key="1">
    <source>
        <dbReference type="HAMAP-Rule" id="MF_00607"/>
    </source>
</evidence>
<proteinExistence type="inferred from homology"/>
<feature type="chain" id="PRO_0000101597" description="Ribosomal RNA small subunit methyltransferase A">
    <location>
        <begin position="1"/>
        <end position="273"/>
    </location>
</feature>
<feature type="binding site" evidence="1">
    <location>
        <position position="18"/>
    </location>
    <ligand>
        <name>S-adenosyl-L-methionine</name>
        <dbReference type="ChEBI" id="CHEBI:59789"/>
    </ligand>
</feature>
<feature type="binding site" evidence="1">
    <location>
        <position position="20"/>
    </location>
    <ligand>
        <name>S-adenosyl-L-methionine</name>
        <dbReference type="ChEBI" id="CHEBI:59789"/>
    </ligand>
</feature>
<feature type="binding site" evidence="1">
    <location>
        <position position="45"/>
    </location>
    <ligand>
        <name>S-adenosyl-L-methionine</name>
        <dbReference type="ChEBI" id="CHEBI:59789"/>
    </ligand>
</feature>
<feature type="binding site" evidence="1">
    <location>
        <position position="66"/>
    </location>
    <ligand>
        <name>S-adenosyl-L-methionine</name>
        <dbReference type="ChEBI" id="CHEBI:59789"/>
    </ligand>
</feature>
<feature type="binding site" evidence="1">
    <location>
        <position position="91"/>
    </location>
    <ligand>
        <name>S-adenosyl-L-methionine</name>
        <dbReference type="ChEBI" id="CHEBI:59789"/>
    </ligand>
</feature>
<feature type="binding site" evidence="1">
    <location>
        <position position="113"/>
    </location>
    <ligand>
        <name>S-adenosyl-L-methionine</name>
        <dbReference type="ChEBI" id="CHEBI:59789"/>
    </ligand>
</feature>
<keyword id="KW-0963">Cytoplasm</keyword>
<keyword id="KW-0489">Methyltransferase</keyword>
<keyword id="KW-0694">RNA-binding</keyword>
<keyword id="KW-0698">rRNA processing</keyword>
<keyword id="KW-0949">S-adenosyl-L-methionine</keyword>
<keyword id="KW-0808">Transferase</keyword>
<organism>
    <name type="scientific">Salmonella paratyphi A (strain ATCC 9150 / SARB42)</name>
    <dbReference type="NCBI Taxonomy" id="295319"/>
    <lineage>
        <taxon>Bacteria</taxon>
        <taxon>Pseudomonadati</taxon>
        <taxon>Pseudomonadota</taxon>
        <taxon>Gammaproteobacteria</taxon>
        <taxon>Enterobacterales</taxon>
        <taxon>Enterobacteriaceae</taxon>
        <taxon>Salmonella</taxon>
    </lineage>
</organism>
<sequence length="273" mass="30516">MNNRVHQGHLARKRFGQNFLNDRFVIDSIVSAINPQKGQAMVEIGPGLAALTEPVGERLDKLTVIELDRDLAARLQTHPFLGPKLTIYQQDAMTMNFGELSAQLGQPLRVFGNLPYNISTPLMFHLFSYTDAIADMHFMLQKEVVNRLVAGPNSKAYGRLSVMAQYYCQVIPVLEVPPSAFTPPPKVDSAVVRLVPHATMPYPVKDIRVLSRITTEAFNQRRKTIRNSLGNLFSVETLTEMGIDPAMRAENISVAQYCQMANYLSENAPLKES</sequence>
<name>RSMA_SALPA</name>